<feature type="chain" id="PRO_0000453860" description="Polyprenyl transferase ausN">
    <location>
        <begin position="1"/>
        <end position="366"/>
    </location>
</feature>
<feature type="transmembrane region" description="Helical" evidence="3">
    <location>
        <begin position="97"/>
        <end position="117"/>
    </location>
</feature>
<feature type="transmembrane region" description="Helical" evidence="3">
    <location>
        <begin position="121"/>
        <end position="141"/>
    </location>
</feature>
<feature type="transmembrane region" description="Helical" evidence="3">
    <location>
        <begin position="164"/>
        <end position="184"/>
    </location>
</feature>
<feature type="transmembrane region" description="Helical" evidence="3">
    <location>
        <begin position="215"/>
        <end position="235"/>
    </location>
</feature>
<feature type="transmembrane region" description="Helical" evidence="3">
    <location>
        <begin position="239"/>
        <end position="259"/>
    </location>
</feature>
<feature type="transmembrane region" description="Helical" evidence="3">
    <location>
        <begin position="287"/>
        <end position="307"/>
    </location>
</feature>
<feature type="transmembrane region" description="Helical" evidence="3">
    <location>
        <begin position="308"/>
        <end position="328"/>
    </location>
</feature>
<feature type="transmembrane region" description="Helical" evidence="3">
    <location>
        <begin position="346"/>
        <end position="366"/>
    </location>
</feature>
<name>AUSN_ASPCI</name>
<gene>
    <name evidence="6" type="primary">ausN</name>
    <name type="ORF">ASPCAL14377</name>
</gene>
<comment type="function">
    <text evidence="2 4 5">Polyprenyl transferase; part of the gene cluster that mediates the biosynthesis of calidodehydroaustin, a fungal meroterpenoid (PubMed:28233494, PubMed:29076725). The first step of the pathway is the synthesis of 3,5-dimethylorsellinic acid by the polyketide synthase ausA (PubMed:28233494). 3,5-dimethylorsellinic acid is then prenylated by the polyprenyl transferase ausN (PubMed:28233494). Further epoxidation by the FAD-dependent monooxygenase ausM and cyclization by the probable terpene cyclase ausL lead to the formation of protoaustinoid A (By similarity). Protoaustinoid A is then oxidized to spiro-lactone preaustinoid A3 by the combined action of the FAD-binding monooxygenases ausB and ausC, and the dioxygenase ausE (By similarity). Acid-catalyzed keto-rearrangement and ring contraction of the tetraketide portion of preaustinoid A3 by ausJ lead to the formation of preaustinoid A4 (By similarity). The aldo-keto reductase ausK, with the help of ausH, is involved in the next step by transforming preaustinoid A4 into isoaustinone which is in turn hydroxylated by the P450 monooxygenase ausI to form austinolide (By similarity). The cytochrome P450 monooxygenase ausG modifies austinolide to austinol (By similarity). Austinol is further acetylated to austin by the O-acetyltransferase ausP, which spontaneously changes to dehydroaustin (PubMed:28233494). The cytochrome P450 monooxygenase ausR then converts dehydroaustin is into 7-dehydrodehydroaustin (PubMed:28233494). The hydroxylation catalyzed by ausR permits the O-acetyltransferase ausQ to add an additional acetyl group to the molecule, leading to the formation of acetoxydehydroaustin (PubMed:28233494). The short chain dehydrogenase ausT catalyzes the reduction of the double bond present between carbon atoms 1 and 2 to convert 7-dehydrodehydroaustin into 1,2-dihydro-7-hydroxydehydroaustin (PubMed:28233494). AusQ catalyzes not only an acetylation reaction but also the addition of the PKS ausV diketide product to 1,2-dihydro-7-hydroxydehydroaustin, forming precalidodehydroaustin (PubMed:28233494). Finally, the iron/alpha-ketoglutarate-dependent dioxygenase converts precalidodehydroaustin into calidodehydroaustin (PubMed:28233494).</text>
</comment>
<comment type="catalytic activity">
    <reaction evidence="2">
        <text>3,5-dimethylorsellinate + (2E,6E)-farnesyl diphosphate = (3R)-3-farnesyl-6-hydroxy-2,3,5-trimethyl-4-oxocyclohexa-1,5-diene-1-carboxylate + diphosphate + H(+)</text>
        <dbReference type="Rhea" id="RHEA:49632"/>
        <dbReference type="ChEBI" id="CHEBI:15378"/>
        <dbReference type="ChEBI" id="CHEBI:33019"/>
        <dbReference type="ChEBI" id="CHEBI:131856"/>
        <dbReference type="ChEBI" id="CHEBI:131857"/>
        <dbReference type="ChEBI" id="CHEBI:175763"/>
    </reaction>
    <physiologicalReaction direction="left-to-right" evidence="2">
        <dbReference type="Rhea" id="RHEA:49633"/>
    </physiologicalReaction>
</comment>
<comment type="cofactor">
    <cofactor evidence="1">
        <name>Mg(2+)</name>
        <dbReference type="ChEBI" id="CHEBI:18420"/>
    </cofactor>
</comment>
<comment type="pathway">
    <text evidence="4">Secondary metabolite biosynthesis; terpenoid biosynthesis.</text>
</comment>
<comment type="subcellular location">
    <subcellularLocation>
        <location evidence="3">Membrane</location>
        <topology evidence="3">Multi-pass membrane protein</topology>
    </subcellularLocation>
</comment>
<comment type="disruption phenotype">
    <text evidence="4">Impairs the biosynthesis of calidodehydroaustin and accumulates the intermediate compound 3,5-dimethylorsellinic acid.</text>
</comment>
<comment type="miscellaneous">
    <text evidence="8">In A.calidoustus, the austinoid gene cluster lies on a contiguous DNA region, while clusters from E.nidulans and P.brasilianum are split in their respective genomes. Genetic rearrangements provoked variability among the clusters and E.nidulans produces the least number of austionoid derivatives with the end products austinol and dehydroaustinol, while P.brasilianum can produce until acetoxydehydroaustin, and A.calidoustus produces the highest number of identified derivatives.</text>
</comment>
<comment type="similarity">
    <text evidence="7">Belongs to the UbiA prenyltransferase family.</text>
</comment>
<accession>A0A0U5CJV1</accession>
<proteinExistence type="evidence at protein level"/>
<keyword id="KW-0460">Magnesium</keyword>
<keyword id="KW-0472">Membrane</keyword>
<keyword id="KW-1185">Reference proteome</keyword>
<keyword id="KW-0808">Transferase</keyword>
<keyword id="KW-0812">Transmembrane</keyword>
<keyword id="KW-1133">Transmembrane helix</keyword>
<evidence type="ECO:0000250" key="1">
    <source>
        <dbReference type="UniProtKB" id="P32378"/>
    </source>
</evidence>
<evidence type="ECO:0000250" key="2">
    <source>
        <dbReference type="UniProtKB" id="Q5AR21"/>
    </source>
</evidence>
<evidence type="ECO:0000255" key="3"/>
<evidence type="ECO:0000269" key="4">
    <source>
    </source>
</evidence>
<evidence type="ECO:0000269" key="5">
    <source>
    </source>
</evidence>
<evidence type="ECO:0000303" key="6">
    <source>
    </source>
</evidence>
<evidence type="ECO:0000305" key="7"/>
<evidence type="ECO:0000305" key="8">
    <source>
    </source>
</evidence>
<organism>
    <name type="scientific">Aspergillus calidoustus</name>
    <dbReference type="NCBI Taxonomy" id="454130"/>
    <lineage>
        <taxon>Eukaryota</taxon>
        <taxon>Fungi</taxon>
        <taxon>Dikarya</taxon>
        <taxon>Ascomycota</taxon>
        <taxon>Pezizomycotina</taxon>
        <taxon>Eurotiomycetes</taxon>
        <taxon>Eurotiomycetidae</taxon>
        <taxon>Eurotiales</taxon>
        <taxon>Aspergillaceae</taxon>
        <taxon>Aspergillus</taxon>
        <taxon>Aspergillus subgen. Nidulantes</taxon>
    </lineage>
</organism>
<reference key="1">
    <citation type="journal article" date="2016" name="Genome Announc.">
        <title>Draft genome sequences of fungus Aspergillus calidoustus.</title>
        <authorList>
            <person name="Horn F."/>
            <person name="Linde J."/>
            <person name="Mattern D.J."/>
            <person name="Walther G."/>
            <person name="Guthke R."/>
            <person name="Scherlach K."/>
            <person name="Martin K."/>
            <person name="Brakhage A.A."/>
            <person name="Petzke L."/>
            <person name="Valiante V."/>
        </authorList>
    </citation>
    <scope>NUCLEOTIDE SEQUENCE [LARGE SCALE GENOMIC DNA]</scope>
    <source>
        <strain>SF006504</strain>
    </source>
</reference>
<reference key="2">
    <citation type="journal article" date="2017" name="ACS Chem. Biol.">
        <title>Discovery of an Extended Austinoid Biosynthetic Pathway in Aspergillus calidoustus.</title>
        <authorList>
            <person name="Valiante V."/>
            <person name="Mattern D.J."/>
            <person name="Schueffler A."/>
            <person name="Horn F."/>
            <person name="Walther G."/>
            <person name="Scherlach K."/>
            <person name="Petzke L."/>
            <person name="Dickhaut J."/>
            <person name="Guthke R."/>
            <person name="Hertweck C."/>
            <person name="Nett M."/>
            <person name="Thines E."/>
            <person name="Brakhage A.A."/>
        </authorList>
    </citation>
    <scope>FUNCTION</scope>
    <scope>CATALYTIC ACTIVITY</scope>
    <scope>DISRUPTION PHENOTYPE</scope>
    <scope>PATHWAY</scope>
</reference>
<reference key="3">
    <citation type="journal article" date="2017" name="ACS Chem. Biol.">
        <title>Rewiring of the austinoid biosynthetic pathway in filamentous fungi.</title>
        <authorList>
            <person name="Mattern D.J."/>
            <person name="Valiante V."/>
            <person name="Horn F."/>
            <person name="Petzke L."/>
            <person name="Brakhage A.A."/>
        </authorList>
    </citation>
    <scope>FUNCTION</scope>
</reference>
<protein>
    <recommendedName>
        <fullName evidence="6">Polyprenyl transferase ausN</fullName>
        <ecNumber evidence="4">2.5.1.-</ecNumber>
    </recommendedName>
    <alternativeName>
        <fullName evidence="6">Austinoid biosynthesis cluster protein N</fullName>
    </alternativeName>
</protein>
<sequence>MCMQEYSTCPTIDHDGLHKICCYSHSQHDCRDPVIDMPPCCYPTLVRKQKMTVNPGSKSHHPKAGLLSYLPAALVPYGELLRVHRALGYYLNTSPYVVGIAYSAATAPTKLPLDLLLDRLLLLTLWSFILRSAGCAWNDLIDVDIDRQISRTQSRPLARGAISLPTATIFTACLFALGCSLFLFLPRQCAFEAGIEVFFALLYPFGKRFTDHPQLILVNIAWAIPMAMHSLGVEPGRQILSSICLCVFIATVIVLIDLVYSRQDTEEDLKVGVKSMAVRYRDCIDTLAYSLFAISTLALLFGGLLGGLRAPFVVFSVGGHIVGFWTFLRASLQTGPAGVESRAKSSCLMASIFWLLGLGIEYAVRV</sequence>
<dbReference type="EC" id="2.5.1.-" evidence="4"/>
<dbReference type="EMBL" id="CDMC01000024">
    <property type="protein sequence ID" value="CEL11274.1"/>
    <property type="molecule type" value="Genomic_DNA"/>
</dbReference>
<dbReference type="SMR" id="A0A0U5CJV1"/>
<dbReference type="STRING" id="454130.A0A0U5CJV1"/>
<dbReference type="OMA" id="FGTWIRP"/>
<dbReference type="OrthoDB" id="18170at2759"/>
<dbReference type="UniPathway" id="UPA00213"/>
<dbReference type="Proteomes" id="UP000054771">
    <property type="component" value="Unassembled WGS sequence"/>
</dbReference>
<dbReference type="GO" id="GO:0005743">
    <property type="term" value="C:mitochondrial inner membrane"/>
    <property type="evidence" value="ECO:0007669"/>
    <property type="project" value="TreeGrafter"/>
</dbReference>
<dbReference type="GO" id="GO:0008412">
    <property type="term" value="F:4-hydroxybenzoate polyprenyltransferase activity"/>
    <property type="evidence" value="ECO:0007669"/>
    <property type="project" value="TreeGrafter"/>
</dbReference>
<dbReference type="GO" id="GO:0016114">
    <property type="term" value="P:terpenoid biosynthetic process"/>
    <property type="evidence" value="ECO:0007669"/>
    <property type="project" value="UniProtKB-UniPathway"/>
</dbReference>
<dbReference type="GO" id="GO:0006744">
    <property type="term" value="P:ubiquinone biosynthetic process"/>
    <property type="evidence" value="ECO:0007669"/>
    <property type="project" value="TreeGrafter"/>
</dbReference>
<dbReference type="CDD" id="cd13959">
    <property type="entry name" value="PT_UbiA_COQ2"/>
    <property type="match status" value="1"/>
</dbReference>
<dbReference type="FunFam" id="1.10.357.140:FF:000008">
    <property type="entry name" value="4-hydroxybenzoate octaprenyltransferase"/>
    <property type="match status" value="1"/>
</dbReference>
<dbReference type="Gene3D" id="1.10.357.140">
    <property type="entry name" value="UbiA prenyltransferase"/>
    <property type="match status" value="1"/>
</dbReference>
<dbReference type="Gene3D" id="1.20.120.1780">
    <property type="entry name" value="UbiA prenyltransferase"/>
    <property type="match status" value="1"/>
</dbReference>
<dbReference type="InterPro" id="IPR039653">
    <property type="entry name" value="Prenyltransferase"/>
</dbReference>
<dbReference type="InterPro" id="IPR000537">
    <property type="entry name" value="UbiA_prenyltransferase"/>
</dbReference>
<dbReference type="InterPro" id="IPR044878">
    <property type="entry name" value="UbiA_sf"/>
</dbReference>
<dbReference type="PANTHER" id="PTHR11048:SF39">
    <property type="entry name" value="POLYPRENYL TRANSFERASE AUSN"/>
    <property type="match status" value="1"/>
</dbReference>
<dbReference type="PANTHER" id="PTHR11048">
    <property type="entry name" value="PRENYLTRANSFERASES"/>
    <property type="match status" value="1"/>
</dbReference>
<dbReference type="Pfam" id="PF01040">
    <property type="entry name" value="UbiA"/>
    <property type="match status" value="1"/>
</dbReference>